<keyword id="KW-0067">ATP-binding</keyword>
<keyword id="KW-0131">Cell cycle</keyword>
<keyword id="KW-0132">Cell division</keyword>
<keyword id="KW-0133">Cell shape</keyword>
<keyword id="KW-0961">Cell wall biogenesis/degradation</keyword>
<keyword id="KW-0963">Cytoplasm</keyword>
<keyword id="KW-0436">Ligase</keyword>
<keyword id="KW-0547">Nucleotide-binding</keyword>
<keyword id="KW-0573">Peptidoglycan synthesis</keyword>
<keyword id="KW-1185">Reference proteome</keyword>
<accession>Q38XM9</accession>
<feature type="chain" id="PRO_0000257198" description="UDP-N-acetylmuramoylalanine--D-glutamate ligase">
    <location>
        <begin position="1"/>
        <end position="454"/>
    </location>
</feature>
<feature type="binding site" evidence="1">
    <location>
        <begin position="119"/>
        <end position="125"/>
    </location>
    <ligand>
        <name>ATP</name>
        <dbReference type="ChEBI" id="CHEBI:30616"/>
    </ligand>
</feature>
<dbReference type="EC" id="6.3.2.9" evidence="1"/>
<dbReference type="EMBL" id="CR936503">
    <property type="protein sequence ID" value="CAI55051.1"/>
    <property type="molecule type" value="Genomic_DNA"/>
</dbReference>
<dbReference type="RefSeq" id="WP_011374454.1">
    <property type="nucleotide sequence ID" value="NC_007576.1"/>
</dbReference>
<dbReference type="SMR" id="Q38XM9"/>
<dbReference type="STRING" id="314315.LCA_0747"/>
<dbReference type="GeneID" id="57133610"/>
<dbReference type="KEGG" id="lsa:LCA_0747"/>
<dbReference type="eggNOG" id="COG0771">
    <property type="taxonomic scope" value="Bacteria"/>
</dbReference>
<dbReference type="HOGENOM" id="CLU_032540_0_1_9"/>
<dbReference type="OrthoDB" id="9809796at2"/>
<dbReference type="UniPathway" id="UPA00219"/>
<dbReference type="Proteomes" id="UP000002707">
    <property type="component" value="Chromosome"/>
</dbReference>
<dbReference type="GO" id="GO:0005737">
    <property type="term" value="C:cytoplasm"/>
    <property type="evidence" value="ECO:0007669"/>
    <property type="project" value="UniProtKB-SubCell"/>
</dbReference>
<dbReference type="GO" id="GO:0005524">
    <property type="term" value="F:ATP binding"/>
    <property type="evidence" value="ECO:0007669"/>
    <property type="project" value="UniProtKB-UniRule"/>
</dbReference>
<dbReference type="GO" id="GO:0008764">
    <property type="term" value="F:UDP-N-acetylmuramoylalanine-D-glutamate ligase activity"/>
    <property type="evidence" value="ECO:0007669"/>
    <property type="project" value="UniProtKB-UniRule"/>
</dbReference>
<dbReference type="GO" id="GO:0051301">
    <property type="term" value="P:cell division"/>
    <property type="evidence" value="ECO:0007669"/>
    <property type="project" value="UniProtKB-KW"/>
</dbReference>
<dbReference type="GO" id="GO:0071555">
    <property type="term" value="P:cell wall organization"/>
    <property type="evidence" value="ECO:0007669"/>
    <property type="project" value="UniProtKB-KW"/>
</dbReference>
<dbReference type="GO" id="GO:0009252">
    <property type="term" value="P:peptidoglycan biosynthetic process"/>
    <property type="evidence" value="ECO:0007669"/>
    <property type="project" value="UniProtKB-UniRule"/>
</dbReference>
<dbReference type="GO" id="GO:0008360">
    <property type="term" value="P:regulation of cell shape"/>
    <property type="evidence" value="ECO:0007669"/>
    <property type="project" value="UniProtKB-KW"/>
</dbReference>
<dbReference type="Gene3D" id="3.90.190.20">
    <property type="entry name" value="Mur ligase, C-terminal domain"/>
    <property type="match status" value="1"/>
</dbReference>
<dbReference type="Gene3D" id="3.40.1190.10">
    <property type="entry name" value="Mur-like, catalytic domain"/>
    <property type="match status" value="1"/>
</dbReference>
<dbReference type="Gene3D" id="3.40.50.720">
    <property type="entry name" value="NAD(P)-binding Rossmann-like Domain"/>
    <property type="match status" value="1"/>
</dbReference>
<dbReference type="HAMAP" id="MF_00639">
    <property type="entry name" value="MurD"/>
    <property type="match status" value="1"/>
</dbReference>
<dbReference type="InterPro" id="IPR036565">
    <property type="entry name" value="Mur-like_cat_sf"/>
</dbReference>
<dbReference type="InterPro" id="IPR004101">
    <property type="entry name" value="Mur_ligase_C"/>
</dbReference>
<dbReference type="InterPro" id="IPR036615">
    <property type="entry name" value="Mur_ligase_C_dom_sf"/>
</dbReference>
<dbReference type="InterPro" id="IPR013221">
    <property type="entry name" value="Mur_ligase_cen"/>
</dbReference>
<dbReference type="InterPro" id="IPR005762">
    <property type="entry name" value="MurD"/>
</dbReference>
<dbReference type="NCBIfam" id="TIGR01087">
    <property type="entry name" value="murD"/>
    <property type="match status" value="1"/>
</dbReference>
<dbReference type="PANTHER" id="PTHR43692">
    <property type="entry name" value="UDP-N-ACETYLMURAMOYLALANINE--D-GLUTAMATE LIGASE"/>
    <property type="match status" value="1"/>
</dbReference>
<dbReference type="PANTHER" id="PTHR43692:SF1">
    <property type="entry name" value="UDP-N-ACETYLMURAMOYLALANINE--D-GLUTAMATE LIGASE"/>
    <property type="match status" value="1"/>
</dbReference>
<dbReference type="Pfam" id="PF02875">
    <property type="entry name" value="Mur_ligase_C"/>
    <property type="match status" value="1"/>
</dbReference>
<dbReference type="Pfam" id="PF08245">
    <property type="entry name" value="Mur_ligase_M"/>
    <property type="match status" value="1"/>
</dbReference>
<dbReference type="Pfam" id="PF21799">
    <property type="entry name" value="MurD-like_N"/>
    <property type="match status" value="1"/>
</dbReference>
<dbReference type="SUPFAM" id="SSF51984">
    <property type="entry name" value="MurCD N-terminal domain"/>
    <property type="match status" value="1"/>
</dbReference>
<dbReference type="SUPFAM" id="SSF53623">
    <property type="entry name" value="MurD-like peptide ligases, catalytic domain"/>
    <property type="match status" value="1"/>
</dbReference>
<dbReference type="SUPFAM" id="SSF53244">
    <property type="entry name" value="MurD-like peptide ligases, peptide-binding domain"/>
    <property type="match status" value="1"/>
</dbReference>
<evidence type="ECO:0000255" key="1">
    <source>
        <dbReference type="HAMAP-Rule" id="MF_00639"/>
    </source>
</evidence>
<reference key="1">
    <citation type="journal article" date="2005" name="Nat. Biotechnol.">
        <title>The complete genome sequence of the meat-borne lactic acid bacterium Lactobacillus sakei 23K.</title>
        <authorList>
            <person name="Chaillou S."/>
            <person name="Champomier-Verges M.-C."/>
            <person name="Cornet M."/>
            <person name="Crutz-Le Coq A.-M."/>
            <person name="Dudez A.-M."/>
            <person name="Martin V."/>
            <person name="Beaufils S."/>
            <person name="Darbon-Rongere E."/>
            <person name="Bossy R."/>
            <person name="Loux V."/>
            <person name="Zagorec M."/>
        </authorList>
    </citation>
    <scope>NUCLEOTIDE SEQUENCE [LARGE SCALE GENOMIC DNA]</scope>
    <source>
        <strain>23K</strain>
    </source>
</reference>
<proteinExistence type="inferred from homology"/>
<sequence>MRTIATYQNQSVLVLGLGKSGVNATKLLLQLGAKVTVNDGQDQEDTPAVAELRALGATVITGSHPVALFEEGFHYLFKNPGIRYDNPMVAEAIKREIPVLTEPELAYEVSEADWVSVTGSNGKTTTTTLIALMLNYQRAQGHAYAAGNIGIPLSEVAQKATAKDTMVTELSSFQLMGTTTVKPKVAVLTNIYEAHLDYHGTRENYVQAKMRIVQNQTASDYFVVNWDLPELRTLSQQTKAQVVPFSRLGTSEEGAYVKDGQLCFKGEVIMPVTDINVPGDHNVENALAALAAAKLMGQSNEAIIEVLTTFTGVKHRMQFVKEFAGRRFYNDSKATNMEATEVALKSFKQPIVLIAGGLDRGFTFEPLTDLLKAHVKAIILYGETKQLLAQTAKEAGIETIEIVDQLTEAVPAAYAASQEGDVILLSPACASWDQFKTFEERGDVYIDAVEQITE</sequence>
<organism>
    <name type="scientific">Latilactobacillus sakei subsp. sakei (strain 23K)</name>
    <name type="common">Lactobacillus sakei subsp. sakei</name>
    <dbReference type="NCBI Taxonomy" id="314315"/>
    <lineage>
        <taxon>Bacteria</taxon>
        <taxon>Bacillati</taxon>
        <taxon>Bacillota</taxon>
        <taxon>Bacilli</taxon>
        <taxon>Lactobacillales</taxon>
        <taxon>Lactobacillaceae</taxon>
        <taxon>Latilactobacillus</taxon>
    </lineage>
</organism>
<name>MURD_LATSS</name>
<comment type="function">
    <text evidence="1">Cell wall formation. Catalyzes the addition of glutamate to the nucleotide precursor UDP-N-acetylmuramoyl-L-alanine (UMA).</text>
</comment>
<comment type="catalytic activity">
    <reaction evidence="1">
        <text>UDP-N-acetyl-alpha-D-muramoyl-L-alanine + D-glutamate + ATP = UDP-N-acetyl-alpha-D-muramoyl-L-alanyl-D-glutamate + ADP + phosphate + H(+)</text>
        <dbReference type="Rhea" id="RHEA:16429"/>
        <dbReference type="ChEBI" id="CHEBI:15378"/>
        <dbReference type="ChEBI" id="CHEBI:29986"/>
        <dbReference type="ChEBI" id="CHEBI:30616"/>
        <dbReference type="ChEBI" id="CHEBI:43474"/>
        <dbReference type="ChEBI" id="CHEBI:83898"/>
        <dbReference type="ChEBI" id="CHEBI:83900"/>
        <dbReference type="ChEBI" id="CHEBI:456216"/>
        <dbReference type="EC" id="6.3.2.9"/>
    </reaction>
</comment>
<comment type="pathway">
    <text evidence="1">Cell wall biogenesis; peptidoglycan biosynthesis.</text>
</comment>
<comment type="subcellular location">
    <subcellularLocation>
        <location evidence="1">Cytoplasm</location>
    </subcellularLocation>
</comment>
<comment type="similarity">
    <text evidence="1">Belongs to the MurCDEF family.</text>
</comment>
<protein>
    <recommendedName>
        <fullName evidence="1">UDP-N-acetylmuramoylalanine--D-glutamate ligase</fullName>
        <ecNumber evidence="1">6.3.2.9</ecNumber>
    </recommendedName>
    <alternativeName>
        <fullName evidence="1">D-glutamic acid-adding enzyme</fullName>
    </alternativeName>
    <alternativeName>
        <fullName evidence="1">UDP-N-acetylmuramoyl-L-alanyl-D-glutamate synthetase</fullName>
    </alternativeName>
</protein>
<gene>
    <name evidence="1" type="primary">murD</name>
    <name type="ordered locus">LCA_0747</name>
</gene>